<dbReference type="EC" id="3.4.22.15"/>
<dbReference type="EMBL" id="Y00697">
    <property type="protein sequence ID" value="CAA68691.1"/>
    <property type="molecule type" value="mRNA"/>
</dbReference>
<dbReference type="EMBL" id="AF025476">
    <property type="protein sequence ID" value="AAB81616.1"/>
    <property type="molecule type" value="Genomic_DNA"/>
</dbReference>
<dbReference type="EMBL" id="BC063175">
    <property type="protein sequence ID" value="AAH63175.1"/>
    <property type="molecule type" value="mRNA"/>
</dbReference>
<dbReference type="EMBL" id="S85184">
    <property type="protein sequence ID" value="AAB21516.1"/>
    <property type="molecule type" value="mRNA"/>
</dbReference>
<dbReference type="PIR" id="S07098">
    <property type="entry name" value="KHRTL"/>
</dbReference>
<dbReference type="RefSeq" id="NP_037288.1">
    <property type="nucleotide sequence ID" value="NM_013156.2"/>
</dbReference>
<dbReference type="SMR" id="P07154"/>
<dbReference type="BioGRID" id="247726">
    <property type="interactions" value="1"/>
</dbReference>
<dbReference type="FunCoup" id="P07154">
    <property type="interactions" value="907"/>
</dbReference>
<dbReference type="IntAct" id="P07154">
    <property type="interactions" value="1"/>
</dbReference>
<dbReference type="STRING" id="10116.ENSRNOP00000025462"/>
<dbReference type="BindingDB" id="P07154"/>
<dbReference type="ChEMBL" id="CHEMBL2305"/>
<dbReference type="MEROPS" id="C01.032"/>
<dbReference type="PhosphoSitePlus" id="P07154"/>
<dbReference type="jPOST" id="P07154"/>
<dbReference type="PaxDb" id="10116-ENSRNOP00000025462"/>
<dbReference type="GeneID" id="25697"/>
<dbReference type="KEGG" id="rno:25697"/>
<dbReference type="UCSC" id="RGD:2448">
    <property type="organism name" value="rat"/>
</dbReference>
<dbReference type="AGR" id="RGD:2448"/>
<dbReference type="CTD" id="1514"/>
<dbReference type="RGD" id="2448">
    <property type="gene designation" value="Ctsl"/>
</dbReference>
<dbReference type="VEuPathDB" id="HostDB:ENSRNOG00000018566"/>
<dbReference type="eggNOG" id="KOG1543">
    <property type="taxonomic scope" value="Eukaryota"/>
</dbReference>
<dbReference type="HOGENOM" id="CLU_012184_1_2_1"/>
<dbReference type="InParanoid" id="P07154"/>
<dbReference type="OrthoDB" id="10253408at2759"/>
<dbReference type="PhylomeDB" id="P07154"/>
<dbReference type="TreeFam" id="TF313739"/>
<dbReference type="BRENDA" id="3.4.22.15">
    <property type="organism ID" value="5301"/>
</dbReference>
<dbReference type="Reactome" id="R-RNO-1474228">
    <property type="pathway name" value="Degradation of the extracellular matrix"/>
</dbReference>
<dbReference type="Reactome" id="R-RNO-1592389">
    <property type="pathway name" value="Activation of Matrix Metalloproteinases"/>
</dbReference>
<dbReference type="Reactome" id="R-RNO-1679131">
    <property type="pathway name" value="Trafficking and processing of endosomal TLR"/>
</dbReference>
<dbReference type="Reactome" id="R-RNO-2022090">
    <property type="pathway name" value="Assembly of collagen fibrils and other multimeric structures"/>
</dbReference>
<dbReference type="Reactome" id="R-RNO-2132295">
    <property type="pathway name" value="MHC class II antigen presentation"/>
</dbReference>
<dbReference type="Reactome" id="R-RNO-8939242">
    <property type="pathway name" value="RUNX1 regulates transcription of genes involved in differentiation of keratinocytes"/>
</dbReference>
<dbReference type="SABIO-RK" id="P07154"/>
<dbReference type="PRO" id="PR:P07154"/>
<dbReference type="Proteomes" id="UP000002494">
    <property type="component" value="Chromosome 17"/>
</dbReference>
<dbReference type="Bgee" id="ENSRNOG00000018566">
    <property type="expression patterns" value="Expressed in kidney and 20 other cell types or tissues"/>
</dbReference>
<dbReference type="ExpressionAtlas" id="P07154">
    <property type="expression patterns" value="baseline and differential"/>
</dbReference>
<dbReference type="GO" id="GO:0045177">
    <property type="term" value="C:apical part of cell"/>
    <property type="evidence" value="ECO:0000314"/>
    <property type="project" value="RGD"/>
</dbReference>
<dbReference type="GO" id="GO:0016324">
    <property type="term" value="C:apical plasma membrane"/>
    <property type="evidence" value="ECO:0007669"/>
    <property type="project" value="UniProtKB-SubCell"/>
</dbReference>
<dbReference type="GO" id="GO:0042583">
    <property type="term" value="C:chromaffin granule"/>
    <property type="evidence" value="ECO:0000250"/>
    <property type="project" value="UniProtKB"/>
</dbReference>
<dbReference type="GO" id="GO:0031410">
    <property type="term" value="C:cytoplasmic vesicle"/>
    <property type="evidence" value="ECO:0000266"/>
    <property type="project" value="RGD"/>
</dbReference>
<dbReference type="GO" id="GO:0009897">
    <property type="term" value="C:external side of plasma membrane"/>
    <property type="evidence" value="ECO:0000314"/>
    <property type="project" value="RGD"/>
</dbReference>
<dbReference type="GO" id="GO:0005615">
    <property type="term" value="C:extracellular space"/>
    <property type="evidence" value="ECO:0000250"/>
    <property type="project" value="UniProtKB"/>
</dbReference>
<dbReference type="GO" id="GO:0005764">
    <property type="term" value="C:lysosome"/>
    <property type="evidence" value="ECO:0000266"/>
    <property type="project" value="RGD"/>
</dbReference>
<dbReference type="GO" id="GO:0005902">
    <property type="term" value="C:microvillus"/>
    <property type="evidence" value="ECO:0000314"/>
    <property type="project" value="RGD"/>
</dbReference>
<dbReference type="GO" id="GO:0005771">
    <property type="term" value="C:multivesicular body"/>
    <property type="evidence" value="ECO:0000266"/>
    <property type="project" value="RGD"/>
</dbReference>
<dbReference type="GO" id="GO:0005730">
    <property type="term" value="C:nucleolus"/>
    <property type="evidence" value="ECO:0000266"/>
    <property type="project" value="RGD"/>
</dbReference>
<dbReference type="GO" id="GO:0005634">
    <property type="term" value="C:nucleus"/>
    <property type="evidence" value="ECO:0000266"/>
    <property type="project" value="RGD"/>
</dbReference>
<dbReference type="GO" id="GO:0043204">
    <property type="term" value="C:perikaryon"/>
    <property type="evidence" value="ECO:0000314"/>
    <property type="project" value="RGD"/>
</dbReference>
<dbReference type="GO" id="GO:0005886">
    <property type="term" value="C:plasma membrane"/>
    <property type="evidence" value="ECO:0000266"/>
    <property type="project" value="RGD"/>
</dbReference>
<dbReference type="GO" id="GO:0030141">
    <property type="term" value="C:secretory granule"/>
    <property type="evidence" value="ECO:0000314"/>
    <property type="project" value="RGD"/>
</dbReference>
<dbReference type="GO" id="GO:0004177">
    <property type="term" value="F:aminopeptidase activity"/>
    <property type="evidence" value="ECO:0000314"/>
    <property type="project" value="RGD"/>
</dbReference>
<dbReference type="GO" id="GO:0005518">
    <property type="term" value="F:collagen binding"/>
    <property type="evidence" value="ECO:0000266"/>
    <property type="project" value="RGD"/>
</dbReference>
<dbReference type="GO" id="GO:0016807">
    <property type="term" value="F:cysteine-type carboxypeptidase activity"/>
    <property type="evidence" value="ECO:0000266"/>
    <property type="project" value="RGD"/>
</dbReference>
<dbReference type="GO" id="GO:0004197">
    <property type="term" value="F:cysteine-type endopeptidase activity"/>
    <property type="evidence" value="ECO:0000314"/>
    <property type="project" value="CAFA"/>
</dbReference>
<dbReference type="GO" id="GO:0008234">
    <property type="term" value="F:cysteine-type peptidase activity"/>
    <property type="evidence" value="ECO:0000266"/>
    <property type="project" value="RGD"/>
</dbReference>
<dbReference type="GO" id="GO:0004175">
    <property type="term" value="F:endopeptidase activity"/>
    <property type="evidence" value="ECO:0000266"/>
    <property type="project" value="RGD"/>
</dbReference>
<dbReference type="GO" id="GO:0001968">
    <property type="term" value="F:fibronectin binding"/>
    <property type="evidence" value="ECO:0000266"/>
    <property type="project" value="RGD"/>
</dbReference>
<dbReference type="GO" id="GO:0042393">
    <property type="term" value="F:histone binding"/>
    <property type="evidence" value="ECO:0000266"/>
    <property type="project" value="RGD"/>
</dbReference>
<dbReference type="GO" id="GO:0030984">
    <property type="term" value="F:kininogen binding"/>
    <property type="evidence" value="ECO:0000353"/>
    <property type="project" value="RGD"/>
</dbReference>
<dbReference type="GO" id="GO:0046872">
    <property type="term" value="F:metal ion binding"/>
    <property type="evidence" value="ECO:0007669"/>
    <property type="project" value="UniProtKB-KW"/>
</dbReference>
<dbReference type="GO" id="GO:0042277">
    <property type="term" value="F:peptide binding"/>
    <property type="evidence" value="ECO:0000314"/>
    <property type="project" value="RGD"/>
</dbReference>
<dbReference type="GO" id="GO:0044877">
    <property type="term" value="F:protein-containing complex binding"/>
    <property type="evidence" value="ECO:0000353"/>
    <property type="project" value="RGD"/>
</dbReference>
<dbReference type="GO" id="GO:0043394">
    <property type="term" value="F:proteoglycan binding"/>
    <property type="evidence" value="ECO:0000266"/>
    <property type="project" value="RGD"/>
</dbReference>
<dbReference type="GO" id="GO:0097655">
    <property type="term" value="F:serpin family protein binding"/>
    <property type="evidence" value="ECO:0000266"/>
    <property type="project" value="RGD"/>
</dbReference>
<dbReference type="GO" id="GO:0002250">
    <property type="term" value="P:adaptive immune response"/>
    <property type="evidence" value="ECO:0000266"/>
    <property type="project" value="RGD"/>
</dbReference>
<dbReference type="GO" id="GO:0048002">
    <property type="term" value="P:antigen processing and presentation of peptide antigen"/>
    <property type="evidence" value="ECO:0000250"/>
    <property type="project" value="UniProtKB"/>
</dbReference>
<dbReference type="GO" id="GO:0048102">
    <property type="term" value="P:autophagic cell death"/>
    <property type="evidence" value="ECO:0000270"/>
    <property type="project" value="RGD"/>
</dbReference>
<dbReference type="GO" id="GO:0043373">
    <property type="term" value="P:CD4-positive, alpha-beta T cell lineage commitment"/>
    <property type="evidence" value="ECO:0000250"/>
    <property type="project" value="UniProtKB"/>
</dbReference>
<dbReference type="GO" id="GO:0009267">
    <property type="term" value="P:cellular response to starvation"/>
    <property type="evidence" value="ECO:0000270"/>
    <property type="project" value="RGD"/>
</dbReference>
<dbReference type="GO" id="GO:0097067">
    <property type="term" value="P:cellular response to thyroid hormone stimulus"/>
    <property type="evidence" value="ECO:0000266"/>
    <property type="project" value="RGD"/>
</dbReference>
<dbReference type="GO" id="GO:0030574">
    <property type="term" value="P:collagen catabolic process"/>
    <property type="evidence" value="ECO:0000250"/>
    <property type="project" value="UniProtKB"/>
</dbReference>
<dbReference type="GO" id="GO:0046697">
    <property type="term" value="P:decidualization"/>
    <property type="evidence" value="ECO:0000270"/>
    <property type="project" value="RGD"/>
</dbReference>
<dbReference type="GO" id="GO:0060309">
    <property type="term" value="P:elastin catabolic process"/>
    <property type="evidence" value="ECO:0000250"/>
    <property type="project" value="UniProtKB"/>
</dbReference>
<dbReference type="GO" id="GO:0034230">
    <property type="term" value="P:enkephalin processing"/>
    <property type="evidence" value="ECO:0000250"/>
    <property type="project" value="UniProtKB"/>
</dbReference>
<dbReference type="GO" id="GO:0039654">
    <property type="term" value="P:fusion of virus membrane with host endosome membrane"/>
    <property type="evidence" value="ECO:0000266"/>
    <property type="project" value="RGD"/>
</dbReference>
<dbReference type="GO" id="GO:0019064">
    <property type="term" value="P:fusion of virus membrane with host plasma membrane"/>
    <property type="evidence" value="ECO:0000266"/>
    <property type="project" value="RGD"/>
</dbReference>
<dbReference type="GO" id="GO:0031069">
    <property type="term" value="P:hair follicle morphogenesis"/>
    <property type="evidence" value="ECO:0000266"/>
    <property type="project" value="RGD"/>
</dbReference>
<dbReference type="GO" id="GO:0043616">
    <property type="term" value="P:keratinocyte proliferation"/>
    <property type="evidence" value="ECO:0000266"/>
    <property type="project" value="RGD"/>
</dbReference>
<dbReference type="GO" id="GO:0008584">
    <property type="term" value="P:male gonad development"/>
    <property type="evidence" value="ECO:0000270"/>
    <property type="project" value="RGD"/>
</dbReference>
<dbReference type="GO" id="GO:0010839">
    <property type="term" value="P:negative regulation of keratinocyte proliferation"/>
    <property type="evidence" value="ECO:0000266"/>
    <property type="project" value="RGD"/>
</dbReference>
<dbReference type="GO" id="GO:0021675">
    <property type="term" value="P:nerve development"/>
    <property type="evidence" value="ECO:0000270"/>
    <property type="project" value="RGD"/>
</dbReference>
<dbReference type="GO" id="GO:0016540">
    <property type="term" value="P:protein autoprocessing"/>
    <property type="evidence" value="ECO:0000250"/>
    <property type="project" value="UniProtKB"/>
</dbReference>
<dbReference type="GO" id="GO:0030163">
    <property type="term" value="P:protein catabolic process"/>
    <property type="evidence" value="ECO:0000314"/>
    <property type="project" value="RGD"/>
</dbReference>
<dbReference type="GO" id="GO:0006508">
    <property type="term" value="P:proteolysis"/>
    <property type="evidence" value="ECO:0000314"/>
    <property type="project" value="CAFA"/>
</dbReference>
<dbReference type="GO" id="GO:0051603">
    <property type="term" value="P:proteolysis involved in protein catabolic process"/>
    <property type="evidence" value="ECO:0000266"/>
    <property type="project" value="RGD"/>
</dbReference>
<dbReference type="GO" id="GO:0019065">
    <property type="term" value="P:receptor-mediated endocytosis of virus by host cell"/>
    <property type="evidence" value="ECO:0000266"/>
    <property type="project" value="RGD"/>
</dbReference>
<dbReference type="GO" id="GO:1904612">
    <property type="term" value="P:response to 2,3,7,8-tetrachlorodibenzodioxine"/>
    <property type="evidence" value="ECO:0000270"/>
    <property type="project" value="RGD"/>
</dbReference>
<dbReference type="GO" id="GO:0051384">
    <property type="term" value="P:response to glucocorticoid"/>
    <property type="evidence" value="ECO:0000270"/>
    <property type="project" value="RGD"/>
</dbReference>
<dbReference type="GO" id="GO:0009749">
    <property type="term" value="P:response to glucose"/>
    <property type="evidence" value="ECO:0000270"/>
    <property type="project" value="RGD"/>
</dbReference>
<dbReference type="GO" id="GO:0034698">
    <property type="term" value="P:response to gonadotropin"/>
    <property type="evidence" value="ECO:0000270"/>
    <property type="project" value="RGD"/>
</dbReference>
<dbReference type="GO" id="GO:1990834">
    <property type="term" value="P:response to odorant"/>
    <property type="evidence" value="ECO:0000270"/>
    <property type="project" value="RGD"/>
</dbReference>
<dbReference type="GO" id="GO:0060008">
    <property type="term" value="P:Sertoli cell differentiation"/>
    <property type="evidence" value="ECO:0000270"/>
    <property type="project" value="RGD"/>
</dbReference>
<dbReference type="GO" id="GO:0007283">
    <property type="term" value="P:spermatogenesis"/>
    <property type="evidence" value="ECO:0000270"/>
    <property type="project" value="RGD"/>
</dbReference>
<dbReference type="GO" id="GO:0046718">
    <property type="term" value="P:symbiont entry into host cell"/>
    <property type="evidence" value="ECO:0000266"/>
    <property type="project" value="RGD"/>
</dbReference>
<dbReference type="GO" id="GO:0006590">
    <property type="term" value="P:thyroid hormone generation"/>
    <property type="evidence" value="ECO:0000266"/>
    <property type="project" value="RGD"/>
</dbReference>
<dbReference type="GO" id="GO:0031638">
    <property type="term" value="P:zymogen activation"/>
    <property type="evidence" value="ECO:0000250"/>
    <property type="project" value="UniProtKB"/>
</dbReference>
<dbReference type="CDD" id="cd02248">
    <property type="entry name" value="Peptidase_C1A"/>
    <property type="match status" value="1"/>
</dbReference>
<dbReference type="FunFam" id="3.90.70.10:FF:000332">
    <property type="entry name" value="Cathepsin L1"/>
    <property type="match status" value="1"/>
</dbReference>
<dbReference type="Gene3D" id="3.90.70.10">
    <property type="entry name" value="Cysteine proteinases"/>
    <property type="match status" value="1"/>
</dbReference>
<dbReference type="InterPro" id="IPR038765">
    <property type="entry name" value="Papain-like_cys_pep_sf"/>
</dbReference>
<dbReference type="InterPro" id="IPR025661">
    <property type="entry name" value="Pept_asp_AS"/>
</dbReference>
<dbReference type="InterPro" id="IPR000169">
    <property type="entry name" value="Pept_cys_AS"/>
</dbReference>
<dbReference type="InterPro" id="IPR025660">
    <property type="entry name" value="Pept_his_AS"/>
</dbReference>
<dbReference type="InterPro" id="IPR013128">
    <property type="entry name" value="Peptidase_C1A"/>
</dbReference>
<dbReference type="InterPro" id="IPR000668">
    <property type="entry name" value="Peptidase_C1A_C"/>
</dbReference>
<dbReference type="InterPro" id="IPR039417">
    <property type="entry name" value="Peptidase_C1A_papain-like"/>
</dbReference>
<dbReference type="InterPro" id="IPR013201">
    <property type="entry name" value="Prot_inhib_I29"/>
</dbReference>
<dbReference type="PANTHER" id="PTHR12411">
    <property type="entry name" value="CYSTEINE PROTEASE FAMILY C1-RELATED"/>
    <property type="match status" value="1"/>
</dbReference>
<dbReference type="Pfam" id="PF08246">
    <property type="entry name" value="Inhibitor_I29"/>
    <property type="match status" value="1"/>
</dbReference>
<dbReference type="Pfam" id="PF00112">
    <property type="entry name" value="Peptidase_C1"/>
    <property type="match status" value="1"/>
</dbReference>
<dbReference type="PRINTS" id="PR00705">
    <property type="entry name" value="PAPAIN"/>
</dbReference>
<dbReference type="SMART" id="SM00848">
    <property type="entry name" value="Inhibitor_I29"/>
    <property type="match status" value="1"/>
</dbReference>
<dbReference type="SMART" id="SM00645">
    <property type="entry name" value="Pept_C1"/>
    <property type="match status" value="1"/>
</dbReference>
<dbReference type="SUPFAM" id="SSF54001">
    <property type="entry name" value="Cysteine proteinases"/>
    <property type="match status" value="1"/>
</dbReference>
<dbReference type="PROSITE" id="PS00640">
    <property type="entry name" value="THIOL_PROTEASE_ASN"/>
    <property type="match status" value="1"/>
</dbReference>
<dbReference type="PROSITE" id="PS00139">
    <property type="entry name" value="THIOL_PROTEASE_CYS"/>
    <property type="match status" value="1"/>
</dbReference>
<dbReference type="PROSITE" id="PS00639">
    <property type="entry name" value="THIOL_PROTEASE_HIS"/>
    <property type="match status" value="1"/>
</dbReference>
<comment type="function">
    <text evidence="1 2 3 11">Thiol protease important for the overall degradation of proteins in lysosomes (By similarity). Plays a critical for normal cellular functions such as general protein turnover, antigen processing and bone remodeling. Involved in the solubilization of cross-linked TG/thyroglobulin and in the subsequent release of thyroid hormone thyroxine (T4) by limited proteolysis of TG/thyroglobulin in the thyroid follicle lumen (By similarity). In neuroendocrine chromaffin cells secretory vesicles, catalyzes the prohormone proenkephalin processing to the active enkephalin peptide neurotransmitter (By similarity). In thymus, regulates CD4(+) T cell positive selection by generating the major histocompatibility complex class II (MHCII) bound peptide ligands presented by cortical thymic epithelial cells. Also mediates invariant chain processing in cortical thymic epithelial cells. Major elastin-degrading enzyme at neutral pH. Accumulates as a mature and active enzyme in the extracellular space of antigen presenting cells (APCs) to regulate degradation of the extracellular matrix in the course of inflammation (By similarity). Secreted form generates endostatin from COL18A1 (By similarity). Critical for cardiac morphology and function. Plays an important role in hair follicle morphogenesis and cycling, as well as epidermal differentiation (By similarity). Required for maximal stimulation of steroidogenesis by TIMP1 (PubMed:7777858).</text>
</comment>
<comment type="catalytic activity">
    <reaction evidence="2">
        <text>Specificity close to that of papain. As compared to cathepsin B, cathepsin L exhibits higher activity toward protein substrates, but has little activity on Z-Arg-Arg-NHMec, and no peptidyl-dipeptidase activity.</text>
        <dbReference type="EC" id="3.4.22.15"/>
    </reaction>
</comment>
<comment type="activity regulation">
    <text evidence="1 2">Inhibited by the propeptide produced by autocleavage (By similarity). Long isoform of CD74/Ii chain stabilizes the conformation of mature CTSL by binding to its active site and serving as a chaperone to help maintain a pool of mature enzyme in endocytic compartments and extracellular space of APCs. IFNG enhances the conversion into the CTSL mature and active form (By similarity). Inhibited by CST6. Inhibited by the glycopeptide antibiotic teicoplanin. Inhibited by amantadine (By similarity).</text>
</comment>
<comment type="subunit">
    <text evidence="1">Dimer of a heavy and a light chain linked by disulfide bonds. Interacts with Long isoform of CD74/Ii chain; the interaction stabilizes the conformation of mature CTSL.</text>
</comment>
<comment type="subcellular location">
    <subcellularLocation>
        <location evidence="11">Lysosome</location>
    </subcellularLocation>
    <subcellularLocation>
        <location evidence="1">Apical cell membrane</location>
        <topology evidence="1">Peripheral membrane protein</topology>
        <orientation evidence="1">Extracellular side</orientation>
    </subcellularLocation>
    <subcellularLocation>
        <location evidence="3">Cytoplasmic vesicle</location>
        <location evidence="3">Secretory vesicle</location>
        <location evidence="3">Chromaffin granule</location>
    </subcellularLocation>
    <subcellularLocation>
        <location evidence="1">Secreted</location>
        <location evidence="1">Extracellular space</location>
    </subcellularLocation>
    <subcellularLocation>
        <location evidence="11">Secreted</location>
    </subcellularLocation>
    <text evidence="1">Localizes to the apical membrane of thyroid epithelial cells. Released at extracellular space by activated dendritic cells and macrophages.</text>
</comment>
<comment type="tissue specificity">
    <text evidence="7 8">Both mature cathepsin L1 and procathepsin L are found in the upper epidermis. The lower epidermis predominantly contains procathepsin L. In seminiferous tubules expression is greater at stages VI-VII than at stages IX-XII.</text>
</comment>
<comment type="induction">
    <text evidence="8">Expression in Sertoli cells is repressed by germ cells.</text>
</comment>
<comment type="PTM">
    <text evidence="1 2">During export along the endocytic pathway, pro-CTSL undergoes several proteolytic cleavages to generate the CTSL single-chain and two-chain mature forms, composed of a heavy chain linked to a light chain by disulfide bonds (By similarity). Autocleavage; produces the single-chain CTSL after cleavage of the propeptide. The cleavage can be intermolecular (By similarity).</text>
</comment>
<comment type="similarity">
    <text evidence="4 5 6">Belongs to the peptidase C1 family.</text>
</comment>
<keyword id="KW-1003">Cell membrane</keyword>
<keyword id="KW-0968">Cytoplasmic vesicle</keyword>
<keyword id="KW-0903">Direct protein sequencing</keyword>
<keyword id="KW-1015">Disulfide bond</keyword>
<keyword id="KW-0378">Hydrolase</keyword>
<keyword id="KW-0458">Lysosome</keyword>
<keyword id="KW-0472">Membrane</keyword>
<keyword id="KW-0479">Metal-binding</keyword>
<keyword id="KW-0645">Protease</keyword>
<keyword id="KW-1185">Reference proteome</keyword>
<keyword id="KW-0964">Secreted</keyword>
<keyword id="KW-0732">Signal</keyword>
<keyword id="KW-0788">Thiol protease</keyword>
<keyword id="KW-0862">Zinc</keyword>
<keyword id="KW-0865">Zymogen</keyword>
<protein>
    <recommendedName>
        <fullName>Procathepsin L</fullName>
        <ecNumber>3.4.22.15</ecNumber>
    </recommendedName>
    <alternativeName>
        <fullName>Cathepsin L1</fullName>
    </alternativeName>
    <alternativeName>
        <fullName>Cyclic protein 2</fullName>
        <shortName>CP-2</shortName>
    </alternativeName>
    <alternativeName>
        <fullName>Major excreted protein</fullName>
        <shortName>MEP</shortName>
    </alternativeName>
    <component>
        <recommendedName>
            <fullName>Cathepsin L</fullName>
        </recommendedName>
    </component>
    <component>
        <recommendedName>
            <fullName>Cathepsin L heavy chain</fullName>
        </recommendedName>
    </component>
    <component>
        <recommendedName>
            <fullName>Cathepsin L light chain</fullName>
        </recommendedName>
    </component>
</protein>
<feature type="signal peptide" evidence="7 9 11">
    <location>
        <begin position="1"/>
        <end position="17"/>
    </location>
</feature>
<feature type="propeptide" id="PRO_0000026256" description="Activation peptide" evidence="10">
    <location>
        <begin position="18"/>
        <end position="113"/>
    </location>
</feature>
<feature type="chain" id="PRO_0000304796" description="Cathepsin L">
    <location>
        <begin position="114"/>
        <end position="334"/>
    </location>
</feature>
<feature type="chain" id="PRO_0000026257" description="Cathepsin L heavy chain">
    <location>
        <begin position="114"/>
        <end position="288"/>
    </location>
</feature>
<feature type="propeptide" id="PRO_0000026258" evidence="10">
    <location>
        <begin position="289"/>
        <end position="290"/>
    </location>
</feature>
<feature type="chain" id="PRO_0000026259" description="Cathepsin L light chain">
    <location>
        <begin position="291"/>
        <end position="334"/>
    </location>
</feature>
<feature type="active site" evidence="2">
    <location>
        <position position="138"/>
    </location>
</feature>
<feature type="active site" evidence="2">
    <location>
        <position position="276"/>
    </location>
</feature>
<feature type="active site" evidence="2">
    <location>
        <position position="300"/>
    </location>
</feature>
<feature type="binding site" evidence="2">
    <location>
        <position position="122"/>
    </location>
    <ligand>
        <name>Zn(2+)</name>
        <dbReference type="ChEBI" id="CHEBI:29105"/>
        <label>1</label>
    </ligand>
</feature>
<feature type="binding site" evidence="2">
    <location>
        <position position="163"/>
    </location>
    <ligand>
        <name>Zn(2+)</name>
        <dbReference type="ChEBI" id="CHEBI:29105"/>
        <label>2</label>
    </ligand>
</feature>
<feature type="binding site" evidence="2">
    <location>
        <position position="184"/>
    </location>
    <ligand>
        <name>Zn(2+)</name>
        <dbReference type="ChEBI" id="CHEBI:29105"/>
        <label>3</label>
    </ligand>
</feature>
<feature type="binding site" evidence="2">
    <location>
        <position position="199"/>
    </location>
    <ligand>
        <name>Zn(2+)</name>
        <dbReference type="ChEBI" id="CHEBI:29105"/>
        <label>2</label>
    </ligand>
</feature>
<feature type="binding site" evidence="2">
    <location>
        <position position="205"/>
    </location>
    <ligand>
        <name>Zn(2+)</name>
        <dbReference type="ChEBI" id="CHEBI:29105"/>
        <label>4</label>
    </ligand>
</feature>
<feature type="binding site" evidence="2">
    <location>
        <position position="227"/>
    </location>
    <ligand>
        <name>Zn(2+)</name>
        <dbReference type="ChEBI" id="CHEBI:29105"/>
        <label>3</label>
    </ligand>
</feature>
<feature type="binding site" evidence="2">
    <location>
        <position position="250"/>
    </location>
    <ligand>
        <name>Zn(2+)</name>
        <dbReference type="ChEBI" id="CHEBI:29105"/>
        <label>5</label>
    </ligand>
</feature>
<feature type="binding site" evidence="2">
    <location>
        <position position="253"/>
    </location>
    <ligand>
        <name>Zn(2+)</name>
        <dbReference type="ChEBI" id="CHEBI:29105"/>
        <label>5</label>
    </ligand>
</feature>
<feature type="binding site" evidence="2">
    <location>
        <position position="273"/>
    </location>
    <ligand>
        <name>Zn(2+)</name>
        <dbReference type="ChEBI" id="CHEBI:29105"/>
        <label>6</label>
    </ligand>
</feature>
<feature type="binding site" evidence="2">
    <location>
        <position position="275"/>
    </location>
    <ligand>
        <name>Zn(2+)</name>
        <dbReference type="ChEBI" id="CHEBI:29105"/>
        <label>7</label>
    </ligand>
</feature>
<feature type="site" description="Cleavage; by autolysis" evidence="2">
    <location>
        <begin position="106"/>
        <end position="107"/>
    </location>
</feature>
<feature type="site" description="Cleavage; by autolysis" evidence="2">
    <location>
        <begin position="107"/>
        <end position="108"/>
    </location>
</feature>
<feature type="site" description="Cleavage; by autolysis" evidence="2">
    <location>
        <begin position="112"/>
        <end position="113"/>
    </location>
</feature>
<feature type="site" description="Cleavage; by autolysis" evidence="2">
    <location>
        <begin position="113"/>
        <end position="114"/>
    </location>
</feature>
<feature type="disulfide bond" evidence="2">
    <location>
        <begin position="135"/>
        <end position="178"/>
    </location>
</feature>
<feature type="disulfide bond" evidence="2">
    <location>
        <begin position="169"/>
        <end position="211"/>
    </location>
</feature>
<feature type="disulfide bond" description="Interchain (between heavy and light chains)" evidence="2">
    <location>
        <begin position="269"/>
        <end position="322"/>
    </location>
</feature>
<feature type="sequence conflict" description="In Ref. 1; CAA68691." evidence="12" ref="1">
    <original>A</original>
    <variation>P</variation>
    <location>
        <position position="238"/>
    </location>
</feature>
<sequence>MTPLLLLAVLCLGTALATPKFDQTFNAQWHQWKSTHRRLYGTNEEEWRRAVWEKNMRMIQLHNGEYSNGKHGFTMEMNAFGDMTNEEFRQIVNGYRHQKHKKGRLFQEPLMLQIPKTVDWREKGCVTPVKNQGQCGSCWAFSASGCLEGQMFLKTGKLISLSEQNLVDCSHDQGNQGCNGGLMDFAFQYIKENGGLDSEESYPYEAKDGSCKYRAEYAVANDTGFVDIPQQEKALMKAVATVGPISVAMDASHPSLQFYSSGIYYEPNCSSKDLDHGVLVVGYGYEGTDSNKDKYWLVKNSWGKEWGMDGYIKIAKDRNNHCGLATAASYPIVN</sequence>
<proteinExistence type="evidence at protein level"/>
<reference key="1">
    <citation type="journal article" date="1987" name="FEBS Lett.">
        <title>Molecular cloning and sequencing of cDNA for rat cathepsin L.</title>
        <authorList>
            <person name="Ishidoh K."/>
            <person name="Towatari T."/>
            <person name="Imajoh S."/>
            <person name="Kawasaki H."/>
            <person name="Kominami E."/>
            <person name="Katunuma N."/>
            <person name="Suzuki K."/>
        </authorList>
    </citation>
    <scope>NUCLEOTIDE SEQUENCE [MRNA]</scope>
    <source>
        <strain>Wistar</strain>
        <tissue>Kidney</tissue>
    </source>
</reference>
<reference key="2">
    <citation type="journal article" date="1989" name="FEBS Lett.">
        <title>Gene structure and 5'-upstream sequence of rat cathepsin L.</title>
        <authorList>
            <person name="Ishidoh K."/>
            <person name="Kominami E."/>
            <person name="Suzuki K."/>
            <person name="Katunuma N."/>
        </authorList>
    </citation>
    <scope>NUCLEOTIDE SEQUENCE</scope>
</reference>
<reference key="3">
    <citation type="journal article" date="2004" name="Genome Res.">
        <title>The status, quality, and expansion of the NIH full-length cDNA project: the Mammalian Gene Collection (MGC).</title>
        <authorList>
            <consortium name="The MGC Project Team"/>
        </authorList>
    </citation>
    <scope>NUCLEOTIDE SEQUENCE [LARGE SCALE MRNA]</scope>
    <source>
        <tissue>Pituitary</tissue>
    </source>
</reference>
<reference key="4">
    <citation type="journal article" date="2001" name="Endocrinology">
        <title>Male germ cells regulate transcription of the cathepsin L gene by rat Sertoli cells.</title>
        <authorList>
            <person name="Zabludoff S.D."/>
            <person name="Charron M."/>
            <person name="DeCerbo J.N."/>
            <person name="Simukova N."/>
            <person name="Wright W.W."/>
        </authorList>
    </citation>
    <scope>NUCLEOTIDE SEQUENCE [GENOMIC DNA] OF 1-42</scope>
    <scope>TISSUE SPECIFICITY</scope>
    <scope>INDUCTION</scope>
    <source>
        <strain>Sprague-Dawley</strain>
    </source>
</reference>
<reference key="5">
    <citation type="journal article" date="1991" name="Mol. Endocrinol.">
        <title>Cyclic protein-2, a secretory product of rat Sertoli cells, is the proenzyme form of cathepsin L.</title>
        <authorList>
            <person name="Erickson-Lawrence M."/>
            <person name="Zabludoff S.D."/>
            <person name="Wright W.W."/>
        </authorList>
    </citation>
    <scope>NUCLEOTIDE SEQUENCE [MRNA] OF 88-334</scope>
    <source>
        <tissue>Sertoli cell</tissue>
    </source>
</reference>
<reference key="6">
    <citation type="journal article" date="1995" name="Science">
        <title>Identification of a stimulator of steroid hormone synthesis isolated from testis.</title>
        <authorList>
            <person name="Boujrad N."/>
            <person name="Ogwuegbu S.O."/>
            <person name="Garnier M."/>
            <person name="Lee C.-H."/>
            <person name="Martin B.M."/>
            <person name="Papadopoulos V."/>
        </authorList>
    </citation>
    <scope>PROTEIN SEQUENCE OF 18-37</scope>
    <scope>FUNCTION</scope>
    <scope>SUBCELLULAR LOCATION</scope>
    <source>
        <strain>Sprague-Dawley</strain>
        <tissue>Sertoli cell</tissue>
    </source>
</reference>
<reference key="7">
    <citation type="journal article" date="2000" name="J. Dermatol. Sci.">
        <title>Precursor of rat epidermal cathepsin L: purification and immunohistochemical localization.</title>
        <authorList>
            <person name="Kawada A."/>
            <person name="Hara K."/>
            <person name="Kominami E."/>
            <person name="Tezuka T."/>
            <person name="Takahashi M."/>
            <person name="Takahara H."/>
        </authorList>
    </citation>
    <scope>PROTEIN SEQUENCE OF 18-28</scope>
    <scope>TISSUE SPECIFICITY</scope>
    <source>
        <strain>Sprague-Dawley</strain>
        <tissue>Epidermis</tissue>
    </source>
</reference>
<reference key="8">
    <citation type="journal article" date="1988" name="FEBS Lett.">
        <title>Amino acid sequence of rat liver cathepsin L.</title>
        <authorList>
            <person name="Towatari T."/>
            <person name="Katunuma N."/>
        </authorList>
    </citation>
    <scope>PROTEIN SEQUENCE OF 114-288 AND 291-334</scope>
    <source>
        <tissue>Liver</tissue>
    </source>
</reference>
<reference key="9">
    <citation type="journal article" date="2015" name="J. Proteome Res.">
        <title>Peptidomics for studying limited proteolysis.</title>
        <authorList>
            <person name="Tsuchiya T."/>
            <person name="Osaki T."/>
            <person name="Minamino N."/>
            <person name="Sasaki K."/>
        </authorList>
    </citation>
    <scope>CLEAVAGE OF SIGNAL PEPTIDE AFTER ALA-17</scope>
    <scope>IDENTIFICATION BY MASS SPECTROMETRY</scope>
</reference>
<evidence type="ECO:0000250" key="1">
    <source>
        <dbReference type="UniProtKB" id="P06797"/>
    </source>
</evidence>
<evidence type="ECO:0000250" key="2">
    <source>
        <dbReference type="UniProtKB" id="P07711"/>
    </source>
</evidence>
<evidence type="ECO:0000250" key="3">
    <source>
        <dbReference type="UniProtKB" id="P25975"/>
    </source>
</evidence>
<evidence type="ECO:0000255" key="4">
    <source>
        <dbReference type="PROSITE-ProRule" id="PRU10088"/>
    </source>
</evidence>
<evidence type="ECO:0000255" key="5">
    <source>
        <dbReference type="PROSITE-ProRule" id="PRU10089"/>
    </source>
</evidence>
<evidence type="ECO:0000255" key="6">
    <source>
        <dbReference type="PROSITE-ProRule" id="PRU10090"/>
    </source>
</evidence>
<evidence type="ECO:0000269" key="7">
    <source>
    </source>
</evidence>
<evidence type="ECO:0000269" key="8">
    <source>
    </source>
</evidence>
<evidence type="ECO:0000269" key="9">
    <source>
    </source>
</evidence>
<evidence type="ECO:0000269" key="10">
    <source>
    </source>
</evidence>
<evidence type="ECO:0000269" key="11">
    <source>
    </source>
</evidence>
<evidence type="ECO:0000305" key="12"/>
<evidence type="ECO:0000312" key="13">
    <source>
        <dbReference type="RGD" id="2448"/>
    </source>
</evidence>
<name>CATL1_RAT</name>
<gene>
    <name evidence="13" type="primary">Ctsl</name>
    <name type="synonym">Ctsl1</name>
</gene>
<organism>
    <name type="scientific">Rattus norvegicus</name>
    <name type="common">Rat</name>
    <dbReference type="NCBI Taxonomy" id="10116"/>
    <lineage>
        <taxon>Eukaryota</taxon>
        <taxon>Metazoa</taxon>
        <taxon>Chordata</taxon>
        <taxon>Craniata</taxon>
        <taxon>Vertebrata</taxon>
        <taxon>Euteleostomi</taxon>
        <taxon>Mammalia</taxon>
        <taxon>Eutheria</taxon>
        <taxon>Euarchontoglires</taxon>
        <taxon>Glires</taxon>
        <taxon>Rodentia</taxon>
        <taxon>Myomorpha</taxon>
        <taxon>Muroidea</taxon>
        <taxon>Muridae</taxon>
        <taxon>Murinae</taxon>
        <taxon>Rattus</taxon>
    </lineage>
</organism>
<accession>P07154</accession>
<accession>Q9QV07</accession>